<accession>A9L1H8</accession>
<gene>
    <name evidence="1" type="primary">katG</name>
    <name type="ordered locus">Sbal195_3612</name>
</gene>
<dbReference type="EC" id="1.11.1.21" evidence="1"/>
<dbReference type="EMBL" id="CP000891">
    <property type="protein sequence ID" value="ABX50774.1"/>
    <property type="molecule type" value="Genomic_DNA"/>
</dbReference>
<dbReference type="RefSeq" id="WP_006083983.1">
    <property type="nucleotide sequence ID" value="NC_009997.1"/>
</dbReference>
<dbReference type="SMR" id="A9L1H8"/>
<dbReference type="GeneID" id="11773645"/>
<dbReference type="KEGG" id="sbn:Sbal195_3612"/>
<dbReference type="HOGENOM" id="CLU_025424_2_0_6"/>
<dbReference type="Proteomes" id="UP000000770">
    <property type="component" value="Chromosome"/>
</dbReference>
<dbReference type="GO" id="GO:0005829">
    <property type="term" value="C:cytosol"/>
    <property type="evidence" value="ECO:0007669"/>
    <property type="project" value="TreeGrafter"/>
</dbReference>
<dbReference type="GO" id="GO:0004096">
    <property type="term" value="F:catalase activity"/>
    <property type="evidence" value="ECO:0007669"/>
    <property type="project" value="UniProtKB-UniRule"/>
</dbReference>
<dbReference type="GO" id="GO:0020037">
    <property type="term" value="F:heme binding"/>
    <property type="evidence" value="ECO:0007669"/>
    <property type="project" value="InterPro"/>
</dbReference>
<dbReference type="GO" id="GO:0046872">
    <property type="term" value="F:metal ion binding"/>
    <property type="evidence" value="ECO:0007669"/>
    <property type="project" value="UniProtKB-KW"/>
</dbReference>
<dbReference type="GO" id="GO:0070301">
    <property type="term" value="P:cellular response to hydrogen peroxide"/>
    <property type="evidence" value="ECO:0007669"/>
    <property type="project" value="TreeGrafter"/>
</dbReference>
<dbReference type="GO" id="GO:0042744">
    <property type="term" value="P:hydrogen peroxide catabolic process"/>
    <property type="evidence" value="ECO:0007669"/>
    <property type="project" value="UniProtKB-KW"/>
</dbReference>
<dbReference type="CDD" id="cd00649">
    <property type="entry name" value="catalase_peroxidase_1"/>
    <property type="match status" value="1"/>
</dbReference>
<dbReference type="CDD" id="cd08200">
    <property type="entry name" value="catalase_peroxidase_2"/>
    <property type="match status" value="1"/>
</dbReference>
<dbReference type="FunFam" id="1.10.420.10:FF:000002">
    <property type="entry name" value="Catalase-peroxidase"/>
    <property type="match status" value="1"/>
</dbReference>
<dbReference type="FunFam" id="1.10.420.10:FF:000004">
    <property type="entry name" value="Catalase-peroxidase"/>
    <property type="match status" value="1"/>
</dbReference>
<dbReference type="FunFam" id="1.10.520.10:FF:000002">
    <property type="entry name" value="Catalase-peroxidase"/>
    <property type="match status" value="1"/>
</dbReference>
<dbReference type="Gene3D" id="1.10.520.10">
    <property type="match status" value="2"/>
</dbReference>
<dbReference type="Gene3D" id="1.10.420.10">
    <property type="entry name" value="Peroxidase, domain 2"/>
    <property type="match status" value="2"/>
</dbReference>
<dbReference type="HAMAP" id="MF_01961">
    <property type="entry name" value="Catal_peroxid"/>
    <property type="match status" value="1"/>
</dbReference>
<dbReference type="InterPro" id="IPR000763">
    <property type="entry name" value="Catalase_peroxidase"/>
</dbReference>
<dbReference type="InterPro" id="IPR002016">
    <property type="entry name" value="Haem_peroxidase"/>
</dbReference>
<dbReference type="InterPro" id="IPR010255">
    <property type="entry name" value="Haem_peroxidase_sf"/>
</dbReference>
<dbReference type="InterPro" id="IPR019794">
    <property type="entry name" value="Peroxidases_AS"/>
</dbReference>
<dbReference type="InterPro" id="IPR019793">
    <property type="entry name" value="Peroxidases_heam-ligand_BS"/>
</dbReference>
<dbReference type="NCBIfam" id="TIGR00198">
    <property type="entry name" value="cat_per_HPI"/>
    <property type="match status" value="1"/>
</dbReference>
<dbReference type="NCBIfam" id="NF011635">
    <property type="entry name" value="PRK15061.1"/>
    <property type="match status" value="1"/>
</dbReference>
<dbReference type="PANTHER" id="PTHR30555:SF0">
    <property type="entry name" value="CATALASE-PEROXIDASE"/>
    <property type="match status" value="1"/>
</dbReference>
<dbReference type="PANTHER" id="PTHR30555">
    <property type="entry name" value="HYDROPEROXIDASE I, BIFUNCTIONAL CATALASE-PEROXIDASE"/>
    <property type="match status" value="1"/>
</dbReference>
<dbReference type="Pfam" id="PF00141">
    <property type="entry name" value="peroxidase"/>
    <property type="match status" value="2"/>
</dbReference>
<dbReference type="PRINTS" id="PR00460">
    <property type="entry name" value="BPEROXIDASE"/>
</dbReference>
<dbReference type="PRINTS" id="PR00458">
    <property type="entry name" value="PEROXIDASE"/>
</dbReference>
<dbReference type="SUPFAM" id="SSF48113">
    <property type="entry name" value="Heme-dependent peroxidases"/>
    <property type="match status" value="2"/>
</dbReference>
<dbReference type="PROSITE" id="PS00435">
    <property type="entry name" value="PEROXIDASE_1"/>
    <property type="match status" value="1"/>
</dbReference>
<dbReference type="PROSITE" id="PS00436">
    <property type="entry name" value="PEROXIDASE_2"/>
    <property type="match status" value="1"/>
</dbReference>
<dbReference type="PROSITE" id="PS50873">
    <property type="entry name" value="PEROXIDASE_4"/>
    <property type="match status" value="1"/>
</dbReference>
<name>KATG_SHEB9</name>
<evidence type="ECO:0000255" key="1">
    <source>
        <dbReference type="HAMAP-Rule" id="MF_01961"/>
    </source>
</evidence>
<protein>
    <recommendedName>
        <fullName evidence="1">Catalase-peroxidase</fullName>
        <shortName evidence="1">CP</shortName>
        <ecNumber evidence="1">1.11.1.21</ecNumber>
    </recommendedName>
    <alternativeName>
        <fullName evidence="1">Peroxidase/catalase</fullName>
    </alternativeName>
</protein>
<comment type="function">
    <text evidence="1">Bifunctional enzyme with both catalase and broad-spectrum peroxidase activity.</text>
</comment>
<comment type="catalytic activity">
    <reaction evidence="1">
        <text>H2O2 + AH2 = A + 2 H2O</text>
        <dbReference type="Rhea" id="RHEA:30275"/>
        <dbReference type="ChEBI" id="CHEBI:13193"/>
        <dbReference type="ChEBI" id="CHEBI:15377"/>
        <dbReference type="ChEBI" id="CHEBI:16240"/>
        <dbReference type="ChEBI" id="CHEBI:17499"/>
        <dbReference type="EC" id="1.11.1.21"/>
    </reaction>
</comment>
<comment type="catalytic activity">
    <reaction evidence="1">
        <text>2 H2O2 = O2 + 2 H2O</text>
        <dbReference type="Rhea" id="RHEA:20309"/>
        <dbReference type="ChEBI" id="CHEBI:15377"/>
        <dbReference type="ChEBI" id="CHEBI:15379"/>
        <dbReference type="ChEBI" id="CHEBI:16240"/>
        <dbReference type="EC" id="1.11.1.21"/>
    </reaction>
</comment>
<comment type="cofactor">
    <cofactor evidence="1">
        <name>heme b</name>
        <dbReference type="ChEBI" id="CHEBI:60344"/>
    </cofactor>
    <text evidence="1">Binds 1 heme b (iron(II)-protoporphyrin IX) group per dimer.</text>
</comment>
<comment type="subunit">
    <text evidence="1">Homodimer or homotetramer.</text>
</comment>
<comment type="PTM">
    <text evidence="1">Formation of the three residue Trp-Tyr-Met cross-link is important for the catalase, but not the peroxidase activity of the enzyme.</text>
</comment>
<comment type="similarity">
    <text evidence="1">Belongs to the peroxidase family. Peroxidase/catalase subfamily.</text>
</comment>
<reference key="1">
    <citation type="submission" date="2007-11" db="EMBL/GenBank/DDBJ databases">
        <title>Complete sequence of chromosome of Shewanella baltica OS195.</title>
        <authorList>
            <consortium name="US DOE Joint Genome Institute"/>
            <person name="Copeland A."/>
            <person name="Lucas S."/>
            <person name="Lapidus A."/>
            <person name="Barry K."/>
            <person name="Glavina del Rio T."/>
            <person name="Dalin E."/>
            <person name="Tice H."/>
            <person name="Pitluck S."/>
            <person name="Chain P."/>
            <person name="Malfatti S."/>
            <person name="Shin M."/>
            <person name="Vergez L."/>
            <person name="Schmutz J."/>
            <person name="Larimer F."/>
            <person name="Land M."/>
            <person name="Hauser L."/>
            <person name="Kyrpides N."/>
            <person name="Kim E."/>
            <person name="Brettar I."/>
            <person name="Rodrigues J."/>
            <person name="Konstantinidis K."/>
            <person name="Klappenbach J."/>
            <person name="Hofle M."/>
            <person name="Tiedje J."/>
            <person name="Richardson P."/>
        </authorList>
    </citation>
    <scope>NUCLEOTIDE SEQUENCE [LARGE SCALE GENOMIC DNA]</scope>
    <source>
        <strain>OS195</strain>
    </source>
</reference>
<proteinExistence type="inferred from homology"/>
<feature type="chain" id="PRO_0000354916" description="Catalase-peroxidase">
    <location>
        <begin position="1"/>
        <end position="721"/>
    </location>
</feature>
<feature type="active site" description="Proton acceptor" evidence="1">
    <location>
        <position position="90"/>
    </location>
</feature>
<feature type="binding site" description="axial binding residue" evidence="1">
    <location>
        <position position="253"/>
    </location>
    <ligand>
        <name>heme b</name>
        <dbReference type="ChEBI" id="CHEBI:60344"/>
    </ligand>
    <ligandPart>
        <name>Fe</name>
        <dbReference type="ChEBI" id="CHEBI:18248"/>
    </ligandPart>
</feature>
<feature type="site" description="Transition state stabilizer" evidence="1">
    <location>
        <position position="86"/>
    </location>
</feature>
<feature type="cross-link" description="Tryptophyl-tyrosyl-methioninium (Trp-Tyr) (with M-238)" evidence="1">
    <location>
        <begin position="89"/>
        <end position="212"/>
    </location>
</feature>
<feature type="cross-link" description="Tryptophyl-tyrosyl-methioninium (Tyr-Met) (with W-89)" evidence="1">
    <location>
        <begin position="212"/>
        <end position="238"/>
    </location>
</feature>
<organism>
    <name type="scientific">Shewanella baltica (strain OS195)</name>
    <dbReference type="NCBI Taxonomy" id="399599"/>
    <lineage>
        <taxon>Bacteria</taxon>
        <taxon>Pseudomonadati</taxon>
        <taxon>Pseudomonadota</taxon>
        <taxon>Gammaproteobacteria</taxon>
        <taxon>Alteromonadales</taxon>
        <taxon>Shewanellaceae</taxon>
        <taxon>Shewanella</taxon>
    </lineage>
</organism>
<keyword id="KW-0349">Heme</keyword>
<keyword id="KW-0376">Hydrogen peroxide</keyword>
<keyword id="KW-0408">Iron</keyword>
<keyword id="KW-0479">Metal-binding</keyword>
<keyword id="KW-0560">Oxidoreductase</keyword>
<keyword id="KW-0575">Peroxidase</keyword>
<sequence length="721" mass="79524">MSENKCPMHHSAGGTTNRDWWPKQLRLDILHQHSSLSNPMGDDFNYAEAFKSLDLAAVKQDLLALMTDSQDWWPADFGHYGPLFIRMAWHSAGTYRTGDGRGGAGSGNQRFAPLNSWPDNVSLDKARRLIWPIKQKYGNKISWADLIVLTGNVALESMGFKTLGFAGGRVDIWEPEADIYWGAEDKWLDDKRYSGERDLEDPLAAVQMGLIYVNPEGPNGDPDPFAAAVDIRETFARMAMNDEETVALIAGGHTFGKTHGAGDAALVGPEPEAASIEQQGLGWKSSYKSGKGGDAISSGLEVTWTSTPTQWSNNFFENLFGYEWELTKSPAGAHQWIPKNGAGKGVIPDAHDASKRHVPAMLTTDLALIFDPDYEKISRRLFENPDEFAEIFAKAWYKLTHRDMGPCTRYLGPEVPAEEFLWQDPIPAVDHPLVDEQDVTDLKLKIIGSGLTISEVVATAWASASTYRGSDMRGGANGARIRLAPQKDWPVNQPEQLAKVLKVLESIQSEFNKSGKKISLADLIVLAGCVGIDQAARNAGVEVTIPFTPGRMDATQAQTDVESFAVLEPVADGFRNYHPTQFSVSAEELLVDRAQLLTLTAPEMTVLIGGLRVLDTNADQSKTGVFTARPEFLTNDFFVNLLDMGTTWKPTSKAEDRFEGVDRVSGQPKWTASRVDLIFGSNSQLRALAEVYASSDAQLRFIDDFIAAWTKVMNLDRFDLR</sequence>